<protein>
    <recommendedName>
        <fullName evidence="5 10">Immunoglobulin heavy variable 2-5</fullName>
    </recommendedName>
    <alternativeName>
        <fullName evidence="12">Ig heavy chain V-II region HE</fullName>
    </alternativeName>
    <alternativeName>
        <fullName evidence="13">Ig heavy chain V-II region MCE</fullName>
    </alternativeName>
</protein>
<comment type="function">
    <text evidence="6 7 8 9">V region of the variable domain of immunoglobulin heavy chains that participates in the antigen recognition (PubMed:24600447). Immunoglobulins, also known as antibodies, are membrane-bound or secreted glycoproteins produced by B lymphocytes. In the recognition phase of humoral immunity, the membrane-bound immunoglobulins serve as receptors which, upon binding of a specific antigen, trigger the clonal expansion and differentiation of B lymphocytes into immunoglobulins-secreting plasma cells. Secreted immunoglobulins mediate the effector phase of humoral immunity, which results in the elimination of bound antigens (PubMed:20176268, PubMed:22158414). The antigen binding site is formed by the variable domain of one heavy chain, together with that of its associated light chain. Thus, each immunoglobulin has two antigen binding sites with remarkable affinity for a particular antigen. The variable domains are assembled by a process called V-(D)-J rearrangement and can then be subjected to somatic hypermutations which, after exposure to antigen and selection, allow affinity maturation for a particular antigen (PubMed:17576170, PubMed:20176268).</text>
</comment>
<comment type="subunit">
    <text evidence="7">Immunoglobulins are composed of two identical heavy chains and two identical light chains; disulfide-linked.</text>
</comment>
<comment type="subcellular location">
    <subcellularLocation>
        <location evidence="7 8">Secreted</location>
    </subcellularLocation>
    <subcellularLocation>
        <location evidence="7 8">Cell membrane</location>
    </subcellularLocation>
</comment>
<comment type="polymorphism">
    <text evidence="11">There are several alleles. The sequence shown is that of IMGT allele IGHV2-5*02.</text>
</comment>
<comment type="caution">
    <text evidence="11">For examples of full-length immunoglobulin heavy chains (of different isotypes) see AC P0DOX2, AC P0DOX3, AC P0DOX4, AC P0DOX5 and AC P0DOX6.</text>
</comment>
<gene>
    <name evidence="5 10" type="primary">IGHV2-5</name>
</gene>
<sequence>MDTLCSTLLLLTIPSWVLSQITLKESGPTLVKPTQTLTLTCTFSGFSLSTSGVGVGWIRQPPGKALEWLALIYWDDDKRYSPSLKSRLTITKDTSKNQVVLTMTNMDPVDTATYYCAHR</sequence>
<feature type="signal peptide" evidence="3 4">
    <location>
        <begin position="1"/>
        <end position="19"/>
    </location>
</feature>
<feature type="chain" id="PRO_0000059910" description="Immunoglobulin heavy variable 2-5" evidence="3 4">
    <location>
        <begin position="20"/>
        <end position="119"/>
    </location>
</feature>
<feature type="domain" description="Ig-like" evidence="2">
    <location>
        <begin position="20"/>
        <end position="119" status="greater than"/>
    </location>
</feature>
<feature type="region of interest" description="Framework-1" evidence="1">
    <location>
        <begin position="20"/>
        <end position="44"/>
    </location>
</feature>
<feature type="region of interest" description="Complementarity-determining-1" evidence="1">
    <location>
        <begin position="45"/>
        <end position="54"/>
    </location>
</feature>
<feature type="region of interest" description="Framework-2" evidence="1">
    <location>
        <begin position="55"/>
        <end position="71"/>
    </location>
</feature>
<feature type="region of interest" description="Complementarity-determining-2" evidence="1">
    <location>
        <begin position="72"/>
        <end position="78"/>
    </location>
</feature>
<feature type="region of interest" description="Framework-3" evidence="1">
    <location>
        <begin position="79"/>
        <end position="116"/>
    </location>
</feature>
<feature type="region of interest" description="Complementarity-determining-3" evidence="1">
    <location>
        <begin position="117"/>
        <end position="119" status="greater than"/>
    </location>
</feature>
<feature type="modified residue" description="Pyrrolidone carboxylic acid" evidence="3 4">
    <location>
        <position position="20"/>
    </location>
</feature>
<feature type="disulfide bond" evidence="2">
    <location>
        <begin position="41"/>
        <end position="116"/>
    </location>
</feature>
<feature type="sequence conflict" description="In Ref. 2; AA sequence." evidence="11" ref="2">
    <original>ITLKES</original>
    <variation>VTLKEN</variation>
    <location>
        <begin position="21"/>
        <end position="26"/>
    </location>
</feature>
<feature type="sequence conflict" description="In Ref. 3; AA sequence and 2; AA sequence." evidence="11" ref="3 2">
    <original>Q</original>
    <variation>E</variation>
    <location>
        <position position="35"/>
    </location>
</feature>
<feature type="sequence conflict" description="In Ref. 2; AA sequence." evidence="11" ref="2">
    <original>FSGFSLSTSGVG</original>
    <variation>LSGLSLTTDGVA</variation>
    <location>
        <begin position="43"/>
        <end position="54"/>
    </location>
</feature>
<feature type="sequence conflict" description="In Ref. 2; AA sequence." evidence="11" ref="2">
    <original>PPGK</original>
    <variation>GPGR</variation>
    <location>
        <begin position="61"/>
        <end position="64"/>
    </location>
</feature>
<feature type="sequence conflict" description="In Ref. 3; AA sequence." evidence="11" ref="3">
    <original>P</original>
    <variation>R</variation>
    <location>
        <position position="61"/>
    </location>
</feature>
<feature type="sequence conflict" description="In Ref. 3; AA sequence." evidence="11" ref="3">
    <original>LIYWDDDK</original>
    <variation>FINWDDDN</variation>
    <location>
        <begin position="71"/>
        <end position="78"/>
    </location>
</feature>
<feature type="sequence conflict" description="In Ref. 2; AA sequence." evidence="11" ref="2">
    <original>LI</original>
    <variation>WLL</variation>
    <location>
        <begin position="71"/>
        <end position="72"/>
    </location>
</feature>
<feature type="sequence conflict" description="In Ref. 2; AA sequence." evidence="11" ref="2">
    <original>Y</original>
    <variation>F</variation>
    <location>
        <position position="80"/>
    </location>
</feature>
<feature type="sequence conflict" description="In Ref. 3; AA sequence." evidence="11" ref="3">
    <original>K</original>
    <variation>R</variation>
    <location>
        <position position="85"/>
    </location>
</feature>
<feature type="sequence conflict" description="In Ref. 2; AA sequence." evidence="11" ref="2">
    <original>ITK</original>
    <variation>VTR</variation>
    <location>
        <begin position="90"/>
        <end position="92"/>
    </location>
</feature>
<feature type="sequence conflict" description="In Ref. 3; AA sequence." evidence="11" ref="3">
    <original>I</original>
    <variation>G</variation>
    <location>
        <position position="90"/>
    </location>
</feature>
<feature type="sequence conflict" description="In Ref. 3; AA sequence." evidence="11" ref="3">
    <original>K</original>
    <variation>R</variation>
    <location>
        <position position="96"/>
    </location>
</feature>
<feature type="sequence conflict" description="In Ref. 3; AA sequence." evidence="11" ref="3">
    <original>M</original>
    <variation>I</variation>
    <location>
        <position position="103"/>
    </location>
</feature>
<feature type="sequence conflict" description="In Ref. 2; AA sequence." evidence="11" ref="2">
    <original>A</original>
    <variation>V</variation>
    <location>
        <position position="117"/>
    </location>
</feature>
<feature type="non-terminal residue">
    <location>
        <position position="119"/>
    </location>
</feature>
<accession>P01817</accession>
<accession>A0A0A0MS10</accession>
<accession>P01818</accession>
<evidence type="ECO:0000250" key="1">
    <source>
        <dbReference type="UniProtKB" id="P23083"/>
    </source>
</evidence>
<evidence type="ECO:0000255" key="2">
    <source>
        <dbReference type="PROSITE-ProRule" id="PRU00114"/>
    </source>
</evidence>
<evidence type="ECO:0000269" key="3">
    <source>
    </source>
</evidence>
<evidence type="ECO:0000269" key="4">
    <source>
    </source>
</evidence>
<evidence type="ECO:0000303" key="5">
    <source>
    </source>
</evidence>
<evidence type="ECO:0000303" key="6">
    <source>
    </source>
</evidence>
<evidence type="ECO:0000303" key="7">
    <source>
    </source>
</evidence>
<evidence type="ECO:0000303" key="8">
    <source>
    </source>
</evidence>
<evidence type="ECO:0000303" key="9">
    <source>
    </source>
</evidence>
<evidence type="ECO:0000303" key="10">
    <source ref="5"/>
</evidence>
<evidence type="ECO:0000305" key="11"/>
<evidence type="ECO:0000305" key="12">
    <source>
    </source>
</evidence>
<evidence type="ECO:0000305" key="13">
    <source>
    </source>
</evidence>
<reference key="1">
    <citation type="journal article" date="2003" name="Nature">
        <title>The DNA sequence and analysis of human chromosome 14.</title>
        <authorList>
            <person name="Heilig R."/>
            <person name="Eckenberg R."/>
            <person name="Petit J.-L."/>
            <person name="Fonknechten N."/>
            <person name="Da Silva C."/>
            <person name="Cattolico L."/>
            <person name="Levy M."/>
            <person name="Barbe V."/>
            <person name="De Berardinis V."/>
            <person name="Ureta-Vidal A."/>
            <person name="Pelletier E."/>
            <person name="Vico V."/>
            <person name="Anthouard V."/>
            <person name="Rowen L."/>
            <person name="Madan A."/>
            <person name="Qin S."/>
            <person name="Sun H."/>
            <person name="Du H."/>
            <person name="Pepin K."/>
            <person name="Artiguenave F."/>
            <person name="Robert C."/>
            <person name="Cruaud C."/>
            <person name="Bruels T."/>
            <person name="Jaillon O."/>
            <person name="Friedlander L."/>
            <person name="Samson G."/>
            <person name="Brottier P."/>
            <person name="Cure S."/>
            <person name="Segurens B."/>
            <person name="Aniere F."/>
            <person name="Samain S."/>
            <person name="Crespeau H."/>
            <person name="Abbasi N."/>
            <person name="Aiach N."/>
            <person name="Boscus D."/>
            <person name="Dickhoff R."/>
            <person name="Dors M."/>
            <person name="Dubois I."/>
            <person name="Friedman C."/>
            <person name="Gouyvenoux M."/>
            <person name="James R."/>
            <person name="Madan A."/>
            <person name="Mairey-Estrada B."/>
            <person name="Mangenot S."/>
            <person name="Martins N."/>
            <person name="Menard M."/>
            <person name="Oztas S."/>
            <person name="Ratcliffe A."/>
            <person name="Shaffer T."/>
            <person name="Trask B."/>
            <person name="Vacherie B."/>
            <person name="Bellemere C."/>
            <person name="Belser C."/>
            <person name="Besnard-Gonnet M."/>
            <person name="Bartol-Mavel D."/>
            <person name="Boutard M."/>
            <person name="Briez-Silla S."/>
            <person name="Combette S."/>
            <person name="Dufosse-Laurent V."/>
            <person name="Ferron C."/>
            <person name="Lechaplais C."/>
            <person name="Louesse C."/>
            <person name="Muselet D."/>
            <person name="Magdelenat G."/>
            <person name="Pateau E."/>
            <person name="Petit E."/>
            <person name="Sirvain-Trukniewicz P."/>
            <person name="Trybou A."/>
            <person name="Vega-Czarny N."/>
            <person name="Bataille E."/>
            <person name="Bluet E."/>
            <person name="Bordelais I."/>
            <person name="Dubois M."/>
            <person name="Dumont C."/>
            <person name="Guerin T."/>
            <person name="Haffray S."/>
            <person name="Hammadi R."/>
            <person name="Muanga J."/>
            <person name="Pellouin V."/>
            <person name="Robert D."/>
            <person name="Wunderle E."/>
            <person name="Gauguet G."/>
            <person name="Roy A."/>
            <person name="Sainte-Marthe L."/>
            <person name="Verdier J."/>
            <person name="Verdier-Discala C."/>
            <person name="Hillier L.W."/>
            <person name="Fulton L."/>
            <person name="McPherson J."/>
            <person name="Matsuda F."/>
            <person name="Wilson R."/>
            <person name="Scarpelli C."/>
            <person name="Gyapay G."/>
            <person name="Wincker P."/>
            <person name="Saurin W."/>
            <person name="Quetier F."/>
            <person name="Waterston R."/>
            <person name="Hood L."/>
            <person name="Weissenbach J."/>
        </authorList>
    </citation>
    <scope>NUCLEOTIDE SEQUENCE [LARGE SCALE GENOMIC DNA] (IMGT ALLELE IGHV2-5*02)</scope>
</reference>
<reference key="2">
    <citation type="journal article" date="1969" name="Proc. Natl. Acad. Sci. U.S.A.">
        <title>Subgroups of amino acid sequences in the variable regions of immunoglobulin heavy chains.</title>
        <authorList>
            <person name="Cunningham B.A."/>
            <person name="Pflumm M.N."/>
            <person name="Rutishauser U."/>
            <person name="Edelman G.M."/>
        </authorList>
    </citation>
    <scope>PROTEIN SEQUENCE OF 20-119</scope>
    <scope>PYROGLUTAMATE FORMATION AT GLN-20</scope>
</reference>
<reference key="3">
    <citation type="journal article" date="1981" name="J. Immunol.">
        <title>Molecular basis for the temperature-dependent insolubility of cryoglobulins. X. The amino acid sequence of the heavy chain variable region of McE.</title>
        <authorList>
            <person name="Gerber-Jenson B."/>
            <person name="Kazin A."/>
            <person name="Kehoe J.M."/>
            <person name="Scheffel C."/>
            <person name="Erickson B.W."/>
            <person name="Litman G.W."/>
        </authorList>
    </citation>
    <scope>PROTEIN SEQUENCE OF 20-119</scope>
    <scope>PYROGLUTAMATE FORMATION AT GLN-20</scope>
</reference>
<reference key="4">
    <citation type="journal article" date="2001" name="Exp. Clin. Immunogenet.">
        <title>Nomenclature of the human immunoglobulin heavy (IGH) genes.</title>
        <authorList>
            <person name="Lefranc M.P."/>
        </authorList>
    </citation>
    <scope>NOMENCLATURE</scope>
</reference>
<reference key="5">
    <citation type="book" date="2001" name="The Immunoglobulin FactsBook.">
        <title>The Immunoglobulin FactsBook.</title>
        <editorList>
            <person name="Lefranc M.P."/>
            <person name="Lefranc G."/>
        </editorList>
        <authorList>
            <person name="Lefranc M.P."/>
            <person name="Lefranc G."/>
        </authorList>
    </citation>
    <scope>NOMENCLATURE</scope>
</reference>
<reference key="6">
    <citation type="journal article" date="2007" name="Annu. Rev. Genet.">
        <title>Immunoglobulin somatic hypermutation.</title>
        <authorList>
            <person name="Teng G."/>
            <person name="Papavasiliou F.N."/>
        </authorList>
    </citation>
    <scope>REVIEW ON SOMATIC HYPERMUTATION</scope>
</reference>
<reference key="7">
    <citation type="journal article" date="2010" name="J. Allergy Clin. Immunol.">
        <title>Structure and function of immunoglobulins.</title>
        <authorList>
            <person name="Schroeder H.W. Jr."/>
            <person name="Cavacini L."/>
        </authorList>
    </citation>
    <scope>REVIEW ON IMMUNOGLOBULINS</scope>
</reference>
<reference key="8">
    <citation type="journal article" date="2012" name="Nat. Rev. Immunol.">
        <title>Molecular programming of B cell memory.</title>
        <authorList>
            <person name="McHeyzer-Williams M."/>
            <person name="Okitsu S."/>
            <person name="Wang N."/>
            <person name="McHeyzer-Williams L."/>
        </authorList>
    </citation>
    <scope>REVIEW ON FUNCTION</scope>
</reference>
<reference key="9">
    <citation type="journal article" date="2014" name="Front. Immunol.">
        <title>Immunoglobulin and T Cell Receptor Genes: IMGT((R)) and the Birth and Rise of Immunoinformatics.</title>
        <authorList>
            <person name="Lefranc M.P."/>
        </authorList>
    </citation>
    <scope>NOMENCLATURE</scope>
</reference>
<proteinExistence type="evidence at protein level"/>
<organism>
    <name type="scientific">Homo sapiens</name>
    <name type="common">Human</name>
    <dbReference type="NCBI Taxonomy" id="9606"/>
    <lineage>
        <taxon>Eukaryota</taxon>
        <taxon>Metazoa</taxon>
        <taxon>Chordata</taxon>
        <taxon>Craniata</taxon>
        <taxon>Vertebrata</taxon>
        <taxon>Euteleostomi</taxon>
        <taxon>Mammalia</taxon>
        <taxon>Eutheria</taxon>
        <taxon>Euarchontoglires</taxon>
        <taxon>Primates</taxon>
        <taxon>Haplorrhini</taxon>
        <taxon>Catarrhini</taxon>
        <taxon>Hominidae</taxon>
        <taxon>Homo</taxon>
    </lineage>
</organism>
<name>HV205_HUMAN</name>
<dbReference type="EMBL" id="AC244226">
    <property type="status" value="NOT_ANNOTATED_CDS"/>
    <property type="molecule type" value="Genomic_DNA"/>
</dbReference>
<dbReference type="PIR" id="A02092">
    <property type="entry name" value="MHHUMC"/>
</dbReference>
<dbReference type="PIR" id="A02093">
    <property type="entry name" value="G1HUHE"/>
</dbReference>
<dbReference type="EMDB" id="EMD-23507"/>
<dbReference type="EMDB" id="EMD-28558"/>
<dbReference type="EMDB" id="EMD-28559"/>
<dbReference type="EMDB" id="EMD-32442"/>
<dbReference type="EMDB" id="EMD-32448"/>
<dbReference type="EMDB" id="EMD-32786"/>
<dbReference type="EMDB" id="EMD-32787"/>
<dbReference type="EMDB" id="EMD-34130"/>
<dbReference type="EMDB" id="EMD-34131"/>
<dbReference type="EMDB" id="EMD-34135"/>
<dbReference type="SMR" id="P01817"/>
<dbReference type="FunCoup" id="P01817">
    <property type="interactions" value="384"/>
</dbReference>
<dbReference type="IMGT_GENE-DB" id="IGHV2-5"/>
<dbReference type="BioMuta" id="IGHV2-5"/>
<dbReference type="DMDM" id="123825"/>
<dbReference type="MassIVE" id="P01817"/>
<dbReference type="Ensembl" id="ENST00000390597.3">
    <property type="protein sequence ID" value="ENSP00000375006.2"/>
    <property type="gene ID" value="ENSG00000211937.3"/>
</dbReference>
<dbReference type="Ensembl" id="ENST00000560724.3">
    <property type="protein sequence ID" value="ENSP00000473889.3"/>
    <property type="gene ID" value="ENSG00000277318.2"/>
</dbReference>
<dbReference type="UCSC" id="uc059gfq.1">
    <property type="organism name" value="human"/>
</dbReference>
<dbReference type="AGR" id="HGNC:5576"/>
<dbReference type="GeneCards" id="IGHV2-5"/>
<dbReference type="HGNC" id="HGNC:5576">
    <property type="gene designation" value="IGHV2-5"/>
</dbReference>
<dbReference type="HPA" id="ENSG00000211937">
    <property type="expression patterns" value="Tissue enhanced (intestine, lymphoid tissue, stomach)"/>
</dbReference>
<dbReference type="neXtProt" id="NX_P01817"/>
<dbReference type="OpenTargets" id="ENSG00000211937"/>
<dbReference type="VEuPathDB" id="HostDB:ENSG00000211937"/>
<dbReference type="GeneTree" id="ENSGT01030000234536"/>
<dbReference type="InParanoid" id="P01817"/>
<dbReference type="OMA" id="CVRRPQR"/>
<dbReference type="PAN-GO" id="P01817">
    <property type="GO annotations" value="11 GO annotations based on evolutionary models"/>
</dbReference>
<dbReference type="PhylomeDB" id="P01817"/>
<dbReference type="PathwayCommons" id="P01817"/>
<dbReference type="Reactome" id="R-HSA-166663">
    <property type="pathway name" value="Initial triggering of complement"/>
</dbReference>
<dbReference type="Reactome" id="R-HSA-173623">
    <property type="pathway name" value="Classical antibody-mediated complement activation"/>
</dbReference>
<dbReference type="Reactome" id="R-HSA-198933">
    <property type="pathway name" value="Immunoregulatory interactions between a Lymphoid and a non-Lymphoid cell"/>
</dbReference>
<dbReference type="Reactome" id="R-HSA-202733">
    <property type="pathway name" value="Cell surface interactions at the vascular wall"/>
</dbReference>
<dbReference type="Reactome" id="R-HSA-2029481">
    <property type="pathway name" value="FCGR activation"/>
</dbReference>
<dbReference type="Reactome" id="R-HSA-2029482">
    <property type="pathway name" value="Regulation of actin dynamics for phagocytic cup formation"/>
</dbReference>
<dbReference type="Reactome" id="R-HSA-2029485">
    <property type="pathway name" value="Role of phospholipids in phagocytosis"/>
</dbReference>
<dbReference type="Reactome" id="R-HSA-2168880">
    <property type="pathway name" value="Scavenging of heme from plasma"/>
</dbReference>
<dbReference type="Reactome" id="R-HSA-2454202">
    <property type="pathway name" value="Fc epsilon receptor (FCERI) signaling"/>
</dbReference>
<dbReference type="Reactome" id="R-HSA-2730905">
    <property type="pathway name" value="Role of LAT2/NTAL/LAB on calcium mobilization"/>
</dbReference>
<dbReference type="Reactome" id="R-HSA-2871796">
    <property type="pathway name" value="FCERI mediated MAPK activation"/>
</dbReference>
<dbReference type="Reactome" id="R-HSA-2871809">
    <property type="pathway name" value="FCERI mediated Ca+2 mobilization"/>
</dbReference>
<dbReference type="Reactome" id="R-HSA-2871837">
    <property type="pathway name" value="FCERI mediated NF-kB activation"/>
</dbReference>
<dbReference type="Reactome" id="R-HSA-5690714">
    <property type="pathway name" value="CD22 mediated BCR regulation"/>
</dbReference>
<dbReference type="Reactome" id="R-HSA-9664323">
    <property type="pathway name" value="FCGR3A-mediated IL10 synthesis"/>
</dbReference>
<dbReference type="Reactome" id="R-HSA-9664422">
    <property type="pathway name" value="FCGR3A-mediated phagocytosis"/>
</dbReference>
<dbReference type="Reactome" id="R-HSA-9679191">
    <property type="pathway name" value="Potential therapeutics for SARS"/>
</dbReference>
<dbReference type="Reactome" id="R-HSA-977606">
    <property type="pathway name" value="Regulation of Complement cascade"/>
</dbReference>
<dbReference type="Reactome" id="R-HSA-983695">
    <property type="pathway name" value="Antigen activates B Cell Receptor (BCR) leading to generation of second messengers"/>
</dbReference>
<dbReference type="ChiTaRS" id="IGHV2-5">
    <property type="organism name" value="human"/>
</dbReference>
<dbReference type="Pharos" id="P01817">
    <property type="development level" value="Tdark"/>
</dbReference>
<dbReference type="PRO" id="PR:P01817"/>
<dbReference type="Proteomes" id="UP000005640">
    <property type="component" value="Chromosome 14"/>
</dbReference>
<dbReference type="RNAct" id="P01817">
    <property type="molecule type" value="protein"/>
</dbReference>
<dbReference type="Bgee" id="ENSG00000211937">
    <property type="expression patterns" value="Expressed in rectum and 86 other cell types or tissues"/>
</dbReference>
<dbReference type="GO" id="GO:0005576">
    <property type="term" value="C:extracellular region"/>
    <property type="evidence" value="ECO:0000304"/>
    <property type="project" value="Reactome"/>
</dbReference>
<dbReference type="GO" id="GO:0019814">
    <property type="term" value="C:immunoglobulin complex"/>
    <property type="evidence" value="ECO:0007669"/>
    <property type="project" value="UniProtKB-KW"/>
</dbReference>
<dbReference type="GO" id="GO:0005886">
    <property type="term" value="C:plasma membrane"/>
    <property type="evidence" value="ECO:0000304"/>
    <property type="project" value="Reactome"/>
</dbReference>
<dbReference type="GO" id="GO:0003823">
    <property type="term" value="F:antigen binding"/>
    <property type="evidence" value="ECO:0000318"/>
    <property type="project" value="GO_Central"/>
</dbReference>
<dbReference type="GO" id="GO:0006955">
    <property type="term" value="P:immune response"/>
    <property type="evidence" value="ECO:0000303"/>
    <property type="project" value="UniProtKB"/>
</dbReference>
<dbReference type="GO" id="GO:0016064">
    <property type="term" value="P:immunoglobulin mediated immune response"/>
    <property type="evidence" value="ECO:0000318"/>
    <property type="project" value="GO_Central"/>
</dbReference>
<dbReference type="FunFam" id="2.60.40.10:FF:001533">
    <property type="entry name" value="Immunoglobulin heavy variable 2-26"/>
    <property type="match status" value="1"/>
</dbReference>
<dbReference type="Gene3D" id="2.60.40.10">
    <property type="entry name" value="Immunoglobulins"/>
    <property type="match status" value="1"/>
</dbReference>
<dbReference type="InterPro" id="IPR007110">
    <property type="entry name" value="Ig-like_dom"/>
</dbReference>
<dbReference type="InterPro" id="IPR036179">
    <property type="entry name" value="Ig-like_dom_sf"/>
</dbReference>
<dbReference type="InterPro" id="IPR013783">
    <property type="entry name" value="Ig-like_fold"/>
</dbReference>
<dbReference type="InterPro" id="IPR013106">
    <property type="entry name" value="Ig_V-set"/>
</dbReference>
<dbReference type="InterPro" id="IPR050199">
    <property type="entry name" value="IgHV"/>
</dbReference>
<dbReference type="PANTHER" id="PTHR23266">
    <property type="entry name" value="IMMUNOGLOBULIN HEAVY CHAIN"/>
    <property type="match status" value="1"/>
</dbReference>
<dbReference type="Pfam" id="PF07686">
    <property type="entry name" value="V-set"/>
    <property type="match status" value="1"/>
</dbReference>
<dbReference type="SMART" id="SM00406">
    <property type="entry name" value="IGv"/>
    <property type="match status" value="1"/>
</dbReference>
<dbReference type="SUPFAM" id="SSF48726">
    <property type="entry name" value="Immunoglobulin"/>
    <property type="match status" value="1"/>
</dbReference>
<dbReference type="PROSITE" id="PS50835">
    <property type="entry name" value="IG_LIKE"/>
    <property type="match status" value="1"/>
</dbReference>
<keyword id="KW-1064">Adaptive immunity</keyword>
<keyword id="KW-1003">Cell membrane</keyword>
<keyword id="KW-0903">Direct protein sequencing</keyword>
<keyword id="KW-1015">Disulfide bond</keyword>
<keyword id="KW-0391">Immunity</keyword>
<keyword id="KW-1280">Immunoglobulin</keyword>
<keyword id="KW-0393">Immunoglobulin domain</keyword>
<keyword id="KW-0472">Membrane</keyword>
<keyword id="KW-1267">Proteomics identification</keyword>
<keyword id="KW-0873">Pyrrolidone carboxylic acid</keyword>
<keyword id="KW-1185">Reference proteome</keyword>
<keyword id="KW-0964">Secreted</keyword>
<keyword id="KW-0732">Signal</keyword>